<name>RS17_SALAI</name>
<feature type="chain" id="PRO_1000086852" description="Small ribosomal subunit protein uS17">
    <location>
        <begin position="1"/>
        <end position="91"/>
    </location>
</feature>
<comment type="function">
    <text evidence="1">One of the primary rRNA binding proteins, it binds specifically to the 5'-end of 16S ribosomal RNA.</text>
</comment>
<comment type="subunit">
    <text evidence="1">Part of the 30S ribosomal subunit.</text>
</comment>
<comment type="similarity">
    <text evidence="1">Belongs to the universal ribosomal protein uS17 family.</text>
</comment>
<evidence type="ECO:0000255" key="1">
    <source>
        <dbReference type="HAMAP-Rule" id="MF_01345"/>
    </source>
</evidence>
<evidence type="ECO:0000305" key="2"/>
<gene>
    <name evidence="1" type="primary">rpsQ</name>
    <name type="ordered locus">Sare_4306</name>
</gene>
<reference key="1">
    <citation type="submission" date="2007-10" db="EMBL/GenBank/DDBJ databases">
        <title>Complete sequence of Salinispora arenicola CNS-205.</title>
        <authorList>
            <consortium name="US DOE Joint Genome Institute"/>
            <person name="Copeland A."/>
            <person name="Lucas S."/>
            <person name="Lapidus A."/>
            <person name="Barry K."/>
            <person name="Glavina del Rio T."/>
            <person name="Dalin E."/>
            <person name="Tice H."/>
            <person name="Pitluck S."/>
            <person name="Foster B."/>
            <person name="Schmutz J."/>
            <person name="Larimer F."/>
            <person name="Land M."/>
            <person name="Hauser L."/>
            <person name="Kyrpides N."/>
            <person name="Ivanova N."/>
            <person name="Jensen P.R."/>
            <person name="Moore B.S."/>
            <person name="Penn K."/>
            <person name="Jenkins C."/>
            <person name="Udwary D."/>
            <person name="Xiang L."/>
            <person name="Gontang E."/>
            <person name="Richardson P."/>
        </authorList>
    </citation>
    <scope>NUCLEOTIDE SEQUENCE [LARGE SCALE GENOMIC DNA]</scope>
    <source>
        <strain>CNS-205</strain>
    </source>
</reference>
<dbReference type="EMBL" id="CP000850">
    <property type="protein sequence ID" value="ABW00088.1"/>
    <property type="molecule type" value="Genomic_DNA"/>
</dbReference>
<dbReference type="SMR" id="A8M520"/>
<dbReference type="STRING" id="391037.Sare_4306"/>
<dbReference type="KEGG" id="saq:Sare_4306"/>
<dbReference type="PATRIC" id="fig|391037.6.peg.4347"/>
<dbReference type="eggNOG" id="COG0186">
    <property type="taxonomic scope" value="Bacteria"/>
</dbReference>
<dbReference type="HOGENOM" id="CLU_073626_1_0_11"/>
<dbReference type="OrthoDB" id="9811714at2"/>
<dbReference type="GO" id="GO:0022627">
    <property type="term" value="C:cytosolic small ribosomal subunit"/>
    <property type="evidence" value="ECO:0007669"/>
    <property type="project" value="TreeGrafter"/>
</dbReference>
<dbReference type="GO" id="GO:0019843">
    <property type="term" value="F:rRNA binding"/>
    <property type="evidence" value="ECO:0007669"/>
    <property type="project" value="UniProtKB-UniRule"/>
</dbReference>
<dbReference type="GO" id="GO:0003735">
    <property type="term" value="F:structural constituent of ribosome"/>
    <property type="evidence" value="ECO:0007669"/>
    <property type="project" value="InterPro"/>
</dbReference>
<dbReference type="GO" id="GO:0006412">
    <property type="term" value="P:translation"/>
    <property type="evidence" value="ECO:0007669"/>
    <property type="project" value="UniProtKB-UniRule"/>
</dbReference>
<dbReference type="CDD" id="cd00364">
    <property type="entry name" value="Ribosomal_uS17"/>
    <property type="match status" value="1"/>
</dbReference>
<dbReference type="Gene3D" id="2.40.50.140">
    <property type="entry name" value="Nucleic acid-binding proteins"/>
    <property type="match status" value="1"/>
</dbReference>
<dbReference type="HAMAP" id="MF_01345_B">
    <property type="entry name" value="Ribosomal_uS17_B"/>
    <property type="match status" value="1"/>
</dbReference>
<dbReference type="InterPro" id="IPR012340">
    <property type="entry name" value="NA-bd_OB-fold"/>
</dbReference>
<dbReference type="InterPro" id="IPR000266">
    <property type="entry name" value="Ribosomal_uS17"/>
</dbReference>
<dbReference type="InterPro" id="IPR019984">
    <property type="entry name" value="Ribosomal_uS17_bact/chlr"/>
</dbReference>
<dbReference type="InterPro" id="IPR019979">
    <property type="entry name" value="Ribosomal_uS17_CS"/>
</dbReference>
<dbReference type="NCBIfam" id="NF004123">
    <property type="entry name" value="PRK05610.1"/>
    <property type="match status" value="1"/>
</dbReference>
<dbReference type="NCBIfam" id="TIGR03635">
    <property type="entry name" value="uS17_bact"/>
    <property type="match status" value="1"/>
</dbReference>
<dbReference type="PANTHER" id="PTHR10744">
    <property type="entry name" value="40S RIBOSOMAL PROTEIN S11 FAMILY MEMBER"/>
    <property type="match status" value="1"/>
</dbReference>
<dbReference type="PANTHER" id="PTHR10744:SF1">
    <property type="entry name" value="SMALL RIBOSOMAL SUBUNIT PROTEIN US17M"/>
    <property type="match status" value="1"/>
</dbReference>
<dbReference type="Pfam" id="PF00366">
    <property type="entry name" value="Ribosomal_S17"/>
    <property type="match status" value="1"/>
</dbReference>
<dbReference type="PRINTS" id="PR00973">
    <property type="entry name" value="RIBOSOMALS17"/>
</dbReference>
<dbReference type="SUPFAM" id="SSF50249">
    <property type="entry name" value="Nucleic acid-binding proteins"/>
    <property type="match status" value="1"/>
</dbReference>
<dbReference type="PROSITE" id="PS00056">
    <property type="entry name" value="RIBOSOMAL_S17"/>
    <property type="match status" value="1"/>
</dbReference>
<organism>
    <name type="scientific">Salinispora arenicola (strain CNS-205)</name>
    <dbReference type="NCBI Taxonomy" id="391037"/>
    <lineage>
        <taxon>Bacteria</taxon>
        <taxon>Bacillati</taxon>
        <taxon>Actinomycetota</taxon>
        <taxon>Actinomycetes</taxon>
        <taxon>Micromonosporales</taxon>
        <taxon>Micromonosporaceae</taxon>
        <taxon>Salinispora</taxon>
    </lineage>
</organism>
<sequence>MSENTTATTRARRKVREGLVVSDKMEKTVVVEVEDRVKHALYGKIMRRTSKLKVHDEQNSAGIGDRVLIMETRPLSATKRWRLVEILEKAK</sequence>
<accession>A8M520</accession>
<keyword id="KW-0687">Ribonucleoprotein</keyword>
<keyword id="KW-0689">Ribosomal protein</keyword>
<keyword id="KW-0694">RNA-binding</keyword>
<keyword id="KW-0699">rRNA-binding</keyword>
<protein>
    <recommendedName>
        <fullName evidence="1">Small ribosomal subunit protein uS17</fullName>
    </recommendedName>
    <alternativeName>
        <fullName evidence="2">30S ribosomal protein S17</fullName>
    </alternativeName>
</protein>
<proteinExistence type="inferred from homology"/>